<evidence type="ECO:0000305" key="1"/>
<name>HASC1_STRP8</name>
<organism>
    <name type="scientific">Streptococcus pyogenes serotype M18 (strain MGAS8232)</name>
    <dbReference type="NCBI Taxonomy" id="186103"/>
    <lineage>
        <taxon>Bacteria</taxon>
        <taxon>Bacillati</taxon>
        <taxon>Bacillota</taxon>
        <taxon>Bacilli</taxon>
        <taxon>Lactobacillales</taxon>
        <taxon>Streptococcaceae</taxon>
        <taxon>Streptococcus</taxon>
    </lineage>
</organism>
<gene>
    <name type="primary">hasC1</name>
    <name type="synonym">hasC</name>
    <name type="ordered locus">spyM18_2240</name>
</gene>
<proteinExistence type="inferred from homology"/>
<protein>
    <recommendedName>
        <fullName>UTP--glucose-1-phosphate uridylyltransferase 1</fullName>
        <ecNumber>2.7.7.9</ecNumber>
    </recommendedName>
    <alternativeName>
        <fullName>Alpha-D-glucosyl-1-phosphate uridylyltransferase 1</fullName>
    </alternativeName>
    <alternativeName>
        <fullName>UDP-glucose pyrophosphorylase 1</fullName>
        <shortName>UDPGP 1</shortName>
    </alternativeName>
    <alternativeName>
        <fullName>Uridine diphosphoglucose pyrophosphorylase 1</fullName>
    </alternativeName>
</protein>
<reference key="1">
    <citation type="journal article" date="2002" name="Proc. Natl. Acad. Sci. U.S.A.">
        <title>Genome sequence and comparative microarray analysis of serotype M18 group A Streptococcus strains associated with acute rheumatic fever outbreaks.</title>
        <authorList>
            <person name="Smoot J.C."/>
            <person name="Barbian K.D."/>
            <person name="Van Gompel J.J."/>
            <person name="Smoot L.M."/>
            <person name="Chaussee M.S."/>
            <person name="Sylva G.L."/>
            <person name="Sturdevant D.E."/>
            <person name="Ricklefs S.M."/>
            <person name="Porcella S.F."/>
            <person name="Parkins L.D."/>
            <person name="Beres S.B."/>
            <person name="Campbell D.S."/>
            <person name="Smith T.M."/>
            <person name="Zhang Q."/>
            <person name="Kapur V."/>
            <person name="Daly J.A."/>
            <person name="Veasy L.G."/>
            <person name="Musser J.M."/>
        </authorList>
    </citation>
    <scope>NUCLEOTIDE SEQUENCE [LARGE SCALE GENOMIC DNA]</scope>
    <source>
        <strain>MGAS8232</strain>
    </source>
</reference>
<dbReference type="EC" id="2.7.7.9"/>
<dbReference type="EMBL" id="AE009949">
    <property type="protein sequence ID" value="AAL98669.1"/>
    <property type="molecule type" value="Genomic_DNA"/>
</dbReference>
<dbReference type="RefSeq" id="WP_011018342.1">
    <property type="nucleotide sequence ID" value="NC_003485.1"/>
</dbReference>
<dbReference type="SMR" id="Q8NKW9"/>
<dbReference type="KEGG" id="spm:spyM18_2240"/>
<dbReference type="HOGENOM" id="CLU_029499_1_2_9"/>
<dbReference type="UniPathway" id="UPA00215"/>
<dbReference type="GO" id="GO:0003983">
    <property type="term" value="F:UTP:glucose-1-phosphate uridylyltransferase activity"/>
    <property type="evidence" value="ECO:0007669"/>
    <property type="project" value="UniProtKB-EC"/>
</dbReference>
<dbReference type="GO" id="GO:0009058">
    <property type="term" value="P:biosynthetic process"/>
    <property type="evidence" value="ECO:0007669"/>
    <property type="project" value="InterPro"/>
</dbReference>
<dbReference type="GO" id="GO:0006011">
    <property type="term" value="P:UDP-alpha-D-glucose metabolic process"/>
    <property type="evidence" value="ECO:0007669"/>
    <property type="project" value="InterPro"/>
</dbReference>
<dbReference type="CDD" id="cd02541">
    <property type="entry name" value="UGPase_prokaryotic"/>
    <property type="match status" value="1"/>
</dbReference>
<dbReference type="Gene3D" id="3.90.550.10">
    <property type="entry name" value="Spore Coat Polysaccharide Biosynthesis Protein SpsA, Chain A"/>
    <property type="match status" value="1"/>
</dbReference>
<dbReference type="InterPro" id="IPR005771">
    <property type="entry name" value="GalU_uridylyltTrfase_bac/arc"/>
</dbReference>
<dbReference type="InterPro" id="IPR005835">
    <property type="entry name" value="NTP_transferase_dom"/>
</dbReference>
<dbReference type="InterPro" id="IPR029044">
    <property type="entry name" value="Nucleotide-diphossugar_trans"/>
</dbReference>
<dbReference type="NCBIfam" id="TIGR01099">
    <property type="entry name" value="galU"/>
    <property type="match status" value="1"/>
</dbReference>
<dbReference type="PANTHER" id="PTHR43197">
    <property type="entry name" value="UTP--GLUCOSE-1-PHOSPHATE URIDYLYLTRANSFERASE"/>
    <property type="match status" value="1"/>
</dbReference>
<dbReference type="PANTHER" id="PTHR43197:SF1">
    <property type="entry name" value="UTP--GLUCOSE-1-PHOSPHATE URIDYLYLTRANSFERASE"/>
    <property type="match status" value="1"/>
</dbReference>
<dbReference type="Pfam" id="PF00483">
    <property type="entry name" value="NTP_transferase"/>
    <property type="match status" value="1"/>
</dbReference>
<dbReference type="SUPFAM" id="SSF53448">
    <property type="entry name" value="Nucleotide-diphospho-sugar transferases"/>
    <property type="match status" value="1"/>
</dbReference>
<keyword id="KW-0548">Nucleotidyltransferase</keyword>
<keyword id="KW-0808">Transferase</keyword>
<accession>Q8NKW9</accession>
<comment type="catalytic activity">
    <reaction>
        <text>alpha-D-glucose 1-phosphate + UTP + H(+) = UDP-alpha-D-glucose + diphosphate</text>
        <dbReference type="Rhea" id="RHEA:19889"/>
        <dbReference type="ChEBI" id="CHEBI:15378"/>
        <dbReference type="ChEBI" id="CHEBI:33019"/>
        <dbReference type="ChEBI" id="CHEBI:46398"/>
        <dbReference type="ChEBI" id="CHEBI:58601"/>
        <dbReference type="ChEBI" id="CHEBI:58885"/>
        <dbReference type="EC" id="2.7.7.9"/>
    </reaction>
</comment>
<comment type="pathway">
    <text>Carbohydrate metabolism; nucleotide-sugar metabolism.</text>
</comment>
<comment type="similarity">
    <text evidence="1">Belongs to the UDPGP type 2 family.</text>
</comment>
<feature type="chain" id="PRO_0000201371" description="UTP--glucose-1-phosphate uridylyltransferase 1">
    <location>
        <begin position="1"/>
        <end position="304"/>
    </location>
</feature>
<sequence>MTKVRKAIIPAAGLGTRFLPATKALAKEMLPIVDKPTIQFIVEEALKSGIEEILVVTGKAKRSIEDHFDSNFELEYNLQAKGKNELLKLVDETTAINLHFIRQSHPRGLGDAVLQAKAFVGNEPFVVMLGDDLMDITNASAKPLTKQLMEDYDKTHASTIAVMKVPHEDVSSYGVIAPQGKAVKGLYSVDTFVEKPQPEDAPSDLAIIGRYLLTPEIFDILERQTPGAGNEVQLTDAIDTLNKTQRVFAREFKGNRYDVGDKFGFMKTSIDYALEHPQVKEDLKNYIIKLGKALEKSKVPTHSK</sequence>